<reference key="1">
    <citation type="journal article" date="1992" name="J. Gen. Microbiol.">
        <title>Molecular cloning and sequencing of a non-haem bromoperoxidase gene from Streptomyces aureofaciens ATCC 10762.</title>
        <authorList>
            <person name="Pfeifer O."/>
            <person name="Pelletier I."/>
            <person name="Altenbuchner J."/>
            <person name="van Pee K.-H."/>
        </authorList>
    </citation>
    <scope>NUCLEOTIDE SEQUENCE [GENOMIC DNA]</scope>
    <source>
        <strain>ATCC 10762 / DSM 40127 / CCM 3239 / JCM 4008 / LMG 5968 / NBRC 12843 / NCIMB 8234 / A-377</strain>
    </source>
</reference>
<name>YBP2_KITAU</name>
<dbReference type="EMBL" id="M84990">
    <property type="protein sequence ID" value="AAB84314.1"/>
    <property type="molecule type" value="Unassigned_DNA"/>
</dbReference>
<dbReference type="PIR" id="S27613">
    <property type="entry name" value="S27613"/>
</dbReference>
<dbReference type="SMR" id="P29714"/>
<dbReference type="eggNOG" id="COG0783">
    <property type="taxonomic scope" value="Bacteria"/>
</dbReference>
<dbReference type="GO" id="GO:0008199">
    <property type="term" value="F:ferric iron binding"/>
    <property type="evidence" value="ECO:0007669"/>
    <property type="project" value="InterPro"/>
</dbReference>
<dbReference type="GO" id="GO:0016722">
    <property type="term" value="F:oxidoreductase activity, acting on metal ions"/>
    <property type="evidence" value="ECO:0007669"/>
    <property type="project" value="InterPro"/>
</dbReference>
<dbReference type="CDD" id="cd01043">
    <property type="entry name" value="DPS"/>
    <property type="match status" value="1"/>
</dbReference>
<dbReference type="Gene3D" id="1.20.1260.10">
    <property type="match status" value="1"/>
</dbReference>
<dbReference type="InterPro" id="IPR002177">
    <property type="entry name" value="DPS_DNA-bd"/>
</dbReference>
<dbReference type="InterPro" id="IPR023188">
    <property type="entry name" value="DPS_DNA-bd_CS"/>
</dbReference>
<dbReference type="InterPro" id="IPR012347">
    <property type="entry name" value="Ferritin-like"/>
</dbReference>
<dbReference type="InterPro" id="IPR009078">
    <property type="entry name" value="Ferritin-like_SF"/>
</dbReference>
<dbReference type="InterPro" id="IPR008331">
    <property type="entry name" value="Ferritin_DPS_dom"/>
</dbReference>
<dbReference type="PANTHER" id="PTHR42932">
    <property type="entry name" value="GENERAL STRESS PROTEIN 20U"/>
    <property type="match status" value="1"/>
</dbReference>
<dbReference type="PANTHER" id="PTHR42932:SF1">
    <property type="entry name" value="GENERAL STRESS PROTEIN 20U"/>
    <property type="match status" value="1"/>
</dbReference>
<dbReference type="Pfam" id="PF00210">
    <property type="entry name" value="Ferritin"/>
    <property type="match status" value="1"/>
</dbReference>
<dbReference type="PIRSF" id="PIRSF005900">
    <property type="entry name" value="Dps"/>
    <property type="match status" value="1"/>
</dbReference>
<dbReference type="PRINTS" id="PR01346">
    <property type="entry name" value="HELNAPAPROT"/>
</dbReference>
<dbReference type="SUPFAM" id="SSF47240">
    <property type="entry name" value="Ferritin-like"/>
    <property type="match status" value="1"/>
</dbReference>
<dbReference type="PROSITE" id="PS00818">
    <property type="entry name" value="DPS_1"/>
    <property type="match status" value="1"/>
</dbReference>
<dbReference type="PROSITE" id="PS00819">
    <property type="entry name" value="DPS_2"/>
    <property type="match status" value="1"/>
</dbReference>
<evidence type="ECO:0000305" key="1"/>
<keyword id="KW-0614">Plasmid</keyword>
<organism>
    <name type="scientific">Kitasatospora aureofaciens</name>
    <name type="common">Streptomyces aureofaciens</name>
    <dbReference type="NCBI Taxonomy" id="1894"/>
    <lineage>
        <taxon>Bacteria</taxon>
        <taxon>Bacillati</taxon>
        <taxon>Actinomycetota</taxon>
        <taxon>Actinomycetes</taxon>
        <taxon>Kitasatosporales</taxon>
        <taxon>Streptomycetaceae</taxon>
        <taxon>Kitasatospora</taxon>
    </lineage>
</organism>
<geneLocation type="plasmid">
    <name>pOP2621</name>
</geneLocation>
<feature type="chain" id="PRO_0000201668" description="Uncharacterized protein in bpoA2 5'region">
    <location>
        <begin position="1"/>
        <end position="150" status="greater than"/>
    </location>
</feature>
<feature type="non-terminal residue">
    <location>
        <position position="150"/>
    </location>
</feature>
<proteinExistence type="inferred from homology"/>
<comment type="similarity">
    <text evidence="1">Belongs to the Dps family.</text>
</comment>
<accession>P29714</accession>
<sequence length="150" mass="16648">MTSQPHLHQHAAEIQEFGTVTQLPIALSHDARQYSCQRLNRVLADTQFLYALYKKCHWGMRGPTAYQLHLLFDKHAQEQLELVDALAERVQTLGGVAVGDPRHAARITGVPRPPDGIEDVHSMLSRLLDAHETILADVRDAATRVAGLGD</sequence>
<protein>
    <recommendedName>
        <fullName>Uncharacterized protein in bpoA2 5'region</fullName>
    </recommendedName>
</protein>